<organism>
    <name type="scientific">Levilactobacillus brevis (strain ATCC 367 / BCRC 12310 / CIP 105137 / JCM 1170 / LMG 11437 / NCIMB 947 / NCTC 947)</name>
    <name type="common">Lactobacillus brevis</name>
    <dbReference type="NCBI Taxonomy" id="387344"/>
    <lineage>
        <taxon>Bacteria</taxon>
        <taxon>Bacillati</taxon>
        <taxon>Bacillota</taxon>
        <taxon>Bacilli</taxon>
        <taxon>Lactobacillales</taxon>
        <taxon>Lactobacillaceae</taxon>
        <taxon>Levilactobacillus</taxon>
    </lineage>
</organism>
<proteinExistence type="inferred from homology"/>
<reference key="1">
    <citation type="journal article" date="2006" name="Proc. Natl. Acad. Sci. U.S.A.">
        <title>Comparative genomics of the lactic acid bacteria.</title>
        <authorList>
            <person name="Makarova K.S."/>
            <person name="Slesarev A."/>
            <person name="Wolf Y.I."/>
            <person name="Sorokin A."/>
            <person name="Mirkin B."/>
            <person name="Koonin E.V."/>
            <person name="Pavlov A."/>
            <person name="Pavlova N."/>
            <person name="Karamychev V."/>
            <person name="Polouchine N."/>
            <person name="Shakhova V."/>
            <person name="Grigoriev I."/>
            <person name="Lou Y."/>
            <person name="Rohksar D."/>
            <person name="Lucas S."/>
            <person name="Huang K."/>
            <person name="Goodstein D.M."/>
            <person name="Hawkins T."/>
            <person name="Plengvidhya V."/>
            <person name="Welker D."/>
            <person name="Hughes J."/>
            <person name="Goh Y."/>
            <person name="Benson A."/>
            <person name="Baldwin K."/>
            <person name="Lee J.-H."/>
            <person name="Diaz-Muniz I."/>
            <person name="Dosti B."/>
            <person name="Smeianov V."/>
            <person name="Wechter W."/>
            <person name="Barabote R."/>
            <person name="Lorca G."/>
            <person name="Altermann E."/>
            <person name="Barrangou R."/>
            <person name="Ganesan B."/>
            <person name="Xie Y."/>
            <person name="Rawsthorne H."/>
            <person name="Tamir D."/>
            <person name="Parker C."/>
            <person name="Breidt F."/>
            <person name="Broadbent J.R."/>
            <person name="Hutkins R."/>
            <person name="O'Sullivan D."/>
            <person name="Steele J."/>
            <person name="Unlu G."/>
            <person name="Saier M.H. Jr."/>
            <person name="Klaenhammer T."/>
            <person name="Richardson P."/>
            <person name="Kozyavkin S."/>
            <person name="Weimer B.C."/>
            <person name="Mills D.A."/>
        </authorList>
    </citation>
    <scope>NUCLEOTIDE SEQUENCE [LARGE SCALE GENOMIC DNA]</scope>
    <source>
        <strain>ATCC 367 / BCRC 12310 / CIP 105137 / JCM 1170 / LMG 11437 / NCIMB 947 / NCTC 947</strain>
    </source>
</reference>
<protein>
    <recommendedName>
        <fullName evidence="1">Recombination protein RecR</fullName>
    </recommendedName>
</protein>
<keyword id="KW-0227">DNA damage</keyword>
<keyword id="KW-0233">DNA recombination</keyword>
<keyword id="KW-0234">DNA repair</keyword>
<keyword id="KW-0479">Metal-binding</keyword>
<keyword id="KW-1185">Reference proteome</keyword>
<keyword id="KW-0862">Zinc</keyword>
<keyword id="KW-0863">Zinc-finger</keyword>
<name>RECR_LEVBA</name>
<feature type="chain" id="PRO_1000001554" description="Recombination protein RecR">
    <location>
        <begin position="1"/>
        <end position="199"/>
    </location>
</feature>
<feature type="domain" description="Toprim" evidence="1">
    <location>
        <begin position="80"/>
        <end position="176"/>
    </location>
</feature>
<feature type="zinc finger region" description="C4-type" evidence="1">
    <location>
        <begin position="57"/>
        <end position="72"/>
    </location>
</feature>
<accession>Q03SS5</accession>
<evidence type="ECO:0000255" key="1">
    <source>
        <dbReference type="HAMAP-Rule" id="MF_00017"/>
    </source>
</evidence>
<comment type="function">
    <text evidence="1">May play a role in DNA repair. It seems to be involved in an RecBC-independent recombinational process of DNA repair. It may act with RecF and RecO.</text>
</comment>
<comment type="similarity">
    <text evidence="1">Belongs to the RecR family.</text>
</comment>
<dbReference type="EMBL" id="CP000416">
    <property type="protein sequence ID" value="ABJ63747.1"/>
    <property type="molecule type" value="Genomic_DNA"/>
</dbReference>
<dbReference type="RefSeq" id="WP_011667372.1">
    <property type="nucleotide sequence ID" value="NC_008497.1"/>
</dbReference>
<dbReference type="SMR" id="Q03SS5"/>
<dbReference type="STRING" id="387344.LVIS_0602"/>
<dbReference type="GeneID" id="56992420"/>
<dbReference type="KEGG" id="lbr:LVIS_0602"/>
<dbReference type="eggNOG" id="COG0353">
    <property type="taxonomic scope" value="Bacteria"/>
</dbReference>
<dbReference type="HOGENOM" id="CLU_060739_1_0_9"/>
<dbReference type="Proteomes" id="UP000001652">
    <property type="component" value="Chromosome"/>
</dbReference>
<dbReference type="GO" id="GO:0003677">
    <property type="term" value="F:DNA binding"/>
    <property type="evidence" value="ECO:0007669"/>
    <property type="project" value="UniProtKB-UniRule"/>
</dbReference>
<dbReference type="GO" id="GO:0008270">
    <property type="term" value="F:zinc ion binding"/>
    <property type="evidence" value="ECO:0007669"/>
    <property type="project" value="UniProtKB-KW"/>
</dbReference>
<dbReference type="GO" id="GO:0006310">
    <property type="term" value="P:DNA recombination"/>
    <property type="evidence" value="ECO:0007669"/>
    <property type="project" value="UniProtKB-UniRule"/>
</dbReference>
<dbReference type="GO" id="GO:0006281">
    <property type="term" value="P:DNA repair"/>
    <property type="evidence" value="ECO:0007669"/>
    <property type="project" value="UniProtKB-UniRule"/>
</dbReference>
<dbReference type="CDD" id="cd01025">
    <property type="entry name" value="TOPRIM_recR"/>
    <property type="match status" value="1"/>
</dbReference>
<dbReference type="Gene3D" id="3.30.60.80">
    <property type="match status" value="1"/>
</dbReference>
<dbReference type="Gene3D" id="3.40.1360.10">
    <property type="match status" value="1"/>
</dbReference>
<dbReference type="Gene3D" id="6.10.250.240">
    <property type="match status" value="1"/>
</dbReference>
<dbReference type="Gene3D" id="1.10.8.420">
    <property type="entry name" value="RecR Domain 1"/>
    <property type="match status" value="1"/>
</dbReference>
<dbReference type="HAMAP" id="MF_00017">
    <property type="entry name" value="RecR"/>
    <property type="match status" value="1"/>
</dbReference>
<dbReference type="InterPro" id="IPR000093">
    <property type="entry name" value="DNA_Rcmb_RecR"/>
</dbReference>
<dbReference type="InterPro" id="IPR023627">
    <property type="entry name" value="Rcmb_RecR"/>
</dbReference>
<dbReference type="InterPro" id="IPR015967">
    <property type="entry name" value="Rcmb_RecR_Znf"/>
</dbReference>
<dbReference type="InterPro" id="IPR006171">
    <property type="entry name" value="TOPRIM_dom"/>
</dbReference>
<dbReference type="InterPro" id="IPR034137">
    <property type="entry name" value="TOPRIM_RecR"/>
</dbReference>
<dbReference type="NCBIfam" id="TIGR00615">
    <property type="entry name" value="recR"/>
    <property type="match status" value="1"/>
</dbReference>
<dbReference type="PANTHER" id="PTHR30446">
    <property type="entry name" value="RECOMBINATION PROTEIN RECR"/>
    <property type="match status" value="1"/>
</dbReference>
<dbReference type="PANTHER" id="PTHR30446:SF0">
    <property type="entry name" value="RECOMBINATION PROTEIN RECR"/>
    <property type="match status" value="1"/>
</dbReference>
<dbReference type="Pfam" id="PF21175">
    <property type="entry name" value="RecR_C"/>
    <property type="match status" value="1"/>
</dbReference>
<dbReference type="Pfam" id="PF21176">
    <property type="entry name" value="RecR_HhH"/>
    <property type="match status" value="1"/>
</dbReference>
<dbReference type="Pfam" id="PF02132">
    <property type="entry name" value="RecR_ZnF"/>
    <property type="match status" value="1"/>
</dbReference>
<dbReference type="Pfam" id="PF13662">
    <property type="entry name" value="Toprim_4"/>
    <property type="match status" value="1"/>
</dbReference>
<dbReference type="SMART" id="SM00493">
    <property type="entry name" value="TOPRIM"/>
    <property type="match status" value="1"/>
</dbReference>
<dbReference type="SUPFAM" id="SSF111304">
    <property type="entry name" value="Recombination protein RecR"/>
    <property type="match status" value="1"/>
</dbReference>
<dbReference type="PROSITE" id="PS01300">
    <property type="entry name" value="RECR"/>
    <property type="match status" value="1"/>
</dbReference>
<dbReference type="PROSITE" id="PS50880">
    <property type="entry name" value="TOPRIM"/>
    <property type="match status" value="1"/>
</dbReference>
<sequence length="199" mass="21923">MQYPEPIAQLIDGYMKLPGIGQKSATRLAFFTIDMAEDDVTAFSKALIAAKRDLHFCSICGNITEGDPCSICADKTRDQTHVLVVEQPKDIMVMEKMKEYHGLYHVLHGVMSPIEGKGPEDLNIASLINRLQQNPNIKEVIIATNATPEGEATAMYLSRLIKPAGIKVTRLAHGLSVGSDIEYADEMTLFKAVEGRTEM</sequence>
<gene>
    <name evidence="1" type="primary">recR</name>
    <name type="ordered locus">LVIS_0602</name>
</gene>